<sequence length="345" mass="39799">MPGALSGRRMLPSGLCLGRWQLLRTIRARGRGDPRELPSTPQVLCMKLYGNPKYHQALHYGTVEPQDEITVTYKHGLPLVTLTLPSRKERCQFVVKPMLSTVGSFLQDLQNEDKGIKTAAIITADGSEIPASTLMDTLLMTDFKLIINKLRYDIRCHKKEEPSGEHMTELENTKSLVHRLFTILHLEEIQKRRERHLMAKIDHLQEQLRPLEQVKAAIEARSEANTSGLLWAGLALLSVQGGALAWLTWWVYSWDIMEPVTFFLSFANSIVFFAYFIITRQNYTYSSLRSRQFLQFFHKKSQRRCFDVEQYNKLKEDLAEATESLESVRRSLRLRIQGEEASEKN</sequence>
<dbReference type="EMBL" id="AK013032">
    <property type="protein sequence ID" value="BAB28611.1"/>
    <property type="molecule type" value="mRNA"/>
</dbReference>
<dbReference type="EMBL" id="AK018492">
    <property type="protein sequence ID" value="BAB31237.1"/>
    <property type="status" value="ALT_INIT"/>
    <property type="molecule type" value="mRNA"/>
</dbReference>
<dbReference type="EMBL" id="AK150724">
    <property type="protein sequence ID" value="BAE29802.1"/>
    <property type="molecule type" value="mRNA"/>
</dbReference>
<dbReference type="EMBL" id="AK150995">
    <property type="protein sequence ID" value="BAE30019.1"/>
    <property type="molecule type" value="mRNA"/>
</dbReference>
<dbReference type="EMBL" id="AK151201">
    <property type="protein sequence ID" value="BAE30198.1"/>
    <property type="molecule type" value="mRNA"/>
</dbReference>
<dbReference type="EMBL" id="AK151915">
    <property type="protein sequence ID" value="BAE30794.1"/>
    <property type="molecule type" value="mRNA"/>
</dbReference>
<dbReference type="EMBL" id="AK154338">
    <property type="protein sequence ID" value="BAE32524.1"/>
    <property type="molecule type" value="mRNA"/>
</dbReference>
<dbReference type="EMBL" id="BC049571">
    <property type="protein sequence ID" value="AAH49571.1"/>
    <property type="molecule type" value="mRNA"/>
</dbReference>
<dbReference type="RefSeq" id="NP_001280573.1">
    <property type="nucleotide sequence ID" value="NM_001293644.1"/>
</dbReference>
<dbReference type="RefSeq" id="NP_080055.2">
    <property type="nucleotide sequence ID" value="NM_025779.3"/>
</dbReference>
<dbReference type="SMR" id="Q810S1"/>
<dbReference type="BioGRID" id="211736">
    <property type="interactions" value="2"/>
</dbReference>
<dbReference type="FunCoup" id="Q810S1">
    <property type="interactions" value="161"/>
</dbReference>
<dbReference type="IntAct" id="Q810S1">
    <property type="interactions" value="2"/>
</dbReference>
<dbReference type="MINT" id="Q810S1"/>
<dbReference type="STRING" id="10090.ENSMUSP00000029624"/>
<dbReference type="PhosphoSitePlus" id="Q810S1"/>
<dbReference type="PaxDb" id="10090-ENSMUSP00000029624"/>
<dbReference type="PeptideAtlas" id="Q810S1"/>
<dbReference type="ProteomicsDB" id="292282"/>
<dbReference type="Pumba" id="Q810S1"/>
<dbReference type="Antibodypedia" id="62656">
    <property type="antibodies" value="78 antibodies from 17 providers"/>
</dbReference>
<dbReference type="DNASU" id="66815"/>
<dbReference type="GeneID" id="66815"/>
<dbReference type="KEGG" id="mmu:66815"/>
<dbReference type="UCSC" id="uc008rir.2">
    <property type="organism name" value="mouse"/>
</dbReference>
<dbReference type="AGR" id="MGI:1914065"/>
<dbReference type="CTD" id="55013"/>
<dbReference type="MGI" id="MGI:1914065">
    <property type="gene designation" value="Mcub"/>
</dbReference>
<dbReference type="VEuPathDB" id="HostDB:ENSMUSG00000027994"/>
<dbReference type="eggNOG" id="KOG2966">
    <property type="taxonomic scope" value="Eukaryota"/>
</dbReference>
<dbReference type="HOGENOM" id="CLU_056554_0_1_1"/>
<dbReference type="InParanoid" id="Q810S1"/>
<dbReference type="OMA" id="TINYKHG"/>
<dbReference type="OrthoDB" id="278338at2759"/>
<dbReference type="PhylomeDB" id="Q810S1"/>
<dbReference type="TreeFam" id="TF314435"/>
<dbReference type="Reactome" id="R-MMU-8949215">
    <property type="pathway name" value="Mitochondrial calcium ion transport"/>
</dbReference>
<dbReference type="Reactome" id="R-MMU-8949664">
    <property type="pathway name" value="Processing of SMDT1"/>
</dbReference>
<dbReference type="BioGRID-ORCS" id="66815">
    <property type="hits" value="3 hits in 77 CRISPR screens"/>
</dbReference>
<dbReference type="ChiTaRS" id="Mcub">
    <property type="organism name" value="mouse"/>
</dbReference>
<dbReference type="PRO" id="PR:Q810S1"/>
<dbReference type="Proteomes" id="UP000000589">
    <property type="component" value="Chromosome 3"/>
</dbReference>
<dbReference type="RNAct" id="Q810S1">
    <property type="molecule type" value="protein"/>
</dbReference>
<dbReference type="Bgee" id="ENSMUSG00000027994">
    <property type="expression patterns" value="Expressed in lumbar dorsal root ganglion and 136 other cell types or tissues"/>
</dbReference>
<dbReference type="ExpressionAtlas" id="Q810S1">
    <property type="expression patterns" value="baseline and differential"/>
</dbReference>
<dbReference type="GO" id="GO:0034704">
    <property type="term" value="C:calcium channel complex"/>
    <property type="evidence" value="ECO:0000314"/>
    <property type="project" value="UniProtKB"/>
</dbReference>
<dbReference type="GO" id="GO:0016020">
    <property type="term" value="C:membrane"/>
    <property type="evidence" value="ECO:0000314"/>
    <property type="project" value="UniProtKB"/>
</dbReference>
<dbReference type="GO" id="GO:0005743">
    <property type="term" value="C:mitochondrial inner membrane"/>
    <property type="evidence" value="ECO:0000250"/>
    <property type="project" value="UniProtKB"/>
</dbReference>
<dbReference type="GO" id="GO:0005739">
    <property type="term" value="C:mitochondrion"/>
    <property type="evidence" value="ECO:0000315"/>
    <property type="project" value="UniProtKB"/>
</dbReference>
<dbReference type="GO" id="GO:1990246">
    <property type="term" value="C:uniplex complex"/>
    <property type="evidence" value="ECO:0000250"/>
    <property type="project" value="UniProtKB"/>
</dbReference>
<dbReference type="GO" id="GO:0019855">
    <property type="term" value="F:calcium channel inhibitor activity"/>
    <property type="evidence" value="ECO:0000314"/>
    <property type="project" value="UniProtKB"/>
</dbReference>
<dbReference type="GO" id="GO:0051560">
    <property type="term" value="P:mitochondrial calcium ion homeostasis"/>
    <property type="evidence" value="ECO:0000315"/>
    <property type="project" value="UniProtKB"/>
</dbReference>
<dbReference type="GO" id="GO:0006851">
    <property type="term" value="P:mitochondrial calcium ion transmembrane transport"/>
    <property type="evidence" value="ECO:0000315"/>
    <property type="project" value="UniProtKB"/>
</dbReference>
<dbReference type="GO" id="GO:0110099">
    <property type="term" value="P:negative regulation of calcium import into the mitochondrion"/>
    <property type="evidence" value="ECO:0000314"/>
    <property type="project" value="UniProtKB"/>
</dbReference>
<dbReference type="GO" id="GO:1902726">
    <property type="term" value="P:positive regulation of skeletal muscle satellite cell differentiation"/>
    <property type="evidence" value="ECO:0000315"/>
    <property type="project" value="UniProtKB"/>
</dbReference>
<dbReference type="GO" id="GO:0043030">
    <property type="term" value="P:regulation of macrophage activation"/>
    <property type="evidence" value="ECO:0000315"/>
    <property type="project" value="UniProtKB"/>
</dbReference>
<dbReference type="GO" id="GO:0043403">
    <property type="term" value="P:skeletal muscle tissue regeneration"/>
    <property type="evidence" value="ECO:0000315"/>
    <property type="project" value="UniProtKB"/>
</dbReference>
<dbReference type="InterPro" id="IPR006769">
    <property type="entry name" value="MCU_C"/>
</dbReference>
<dbReference type="InterPro" id="IPR039055">
    <property type="entry name" value="MCU_fam"/>
</dbReference>
<dbReference type="PANTHER" id="PTHR13462">
    <property type="entry name" value="CALCIUM UNIPORTER PROTEIN, MITOCHONDRIAL"/>
    <property type="match status" value="1"/>
</dbReference>
<dbReference type="PANTHER" id="PTHR13462:SF6">
    <property type="entry name" value="CALCIUM UNIPORTER REGULATORY SUBUNIT MCUB, MITOCHONDRIAL"/>
    <property type="match status" value="1"/>
</dbReference>
<dbReference type="Pfam" id="PF04678">
    <property type="entry name" value="MCU"/>
    <property type="match status" value="1"/>
</dbReference>
<protein>
    <recommendedName>
        <fullName evidence="7">Calcium uniporter regulatory subunit MCUb, mitochondrial</fullName>
        <shortName evidence="6">MCUb</shortName>
    </recommendedName>
    <alternativeName>
        <fullName evidence="7">Coiled-coil domain-containing protein 109B</fullName>
    </alternativeName>
</protein>
<proteinExistence type="evidence at protein level"/>
<gene>
    <name evidence="6 8" type="primary">Mcub</name>
    <name evidence="8" type="synonym">Ccdc109b</name>
</gene>
<keyword id="KW-0106">Calcium</keyword>
<keyword id="KW-0109">Calcium transport</keyword>
<keyword id="KW-0175">Coiled coil</keyword>
<keyword id="KW-0406">Ion transport</keyword>
<keyword id="KW-0472">Membrane</keyword>
<keyword id="KW-0496">Mitochondrion</keyword>
<keyword id="KW-0999">Mitochondrion inner membrane</keyword>
<keyword id="KW-1185">Reference proteome</keyword>
<keyword id="KW-0809">Transit peptide</keyword>
<keyword id="KW-0812">Transmembrane</keyword>
<keyword id="KW-1133">Transmembrane helix</keyword>
<keyword id="KW-0813">Transport</keyword>
<organism>
    <name type="scientific">Mus musculus</name>
    <name type="common">Mouse</name>
    <dbReference type="NCBI Taxonomy" id="10090"/>
    <lineage>
        <taxon>Eukaryota</taxon>
        <taxon>Metazoa</taxon>
        <taxon>Chordata</taxon>
        <taxon>Craniata</taxon>
        <taxon>Vertebrata</taxon>
        <taxon>Euteleostomi</taxon>
        <taxon>Mammalia</taxon>
        <taxon>Eutheria</taxon>
        <taxon>Euarchontoglires</taxon>
        <taxon>Glires</taxon>
        <taxon>Rodentia</taxon>
        <taxon>Myomorpha</taxon>
        <taxon>Muroidea</taxon>
        <taxon>Muridae</taxon>
        <taxon>Murinae</taxon>
        <taxon>Mus</taxon>
        <taxon>Mus</taxon>
    </lineage>
</organism>
<accession>Q810S1</accession>
<accession>Q3U4A9</accession>
<accession>Q9CSE7</accession>
<accession>Q9D345</accession>
<name>MCUB_MOUSE</name>
<evidence type="ECO:0000255" key="1"/>
<evidence type="ECO:0000269" key="2">
    <source>
    </source>
</evidence>
<evidence type="ECO:0000269" key="3">
    <source>
    </source>
</evidence>
<evidence type="ECO:0000269" key="4">
    <source>
    </source>
</evidence>
<evidence type="ECO:0000269" key="5">
    <source>
    </source>
</evidence>
<evidence type="ECO:0000303" key="6">
    <source>
    </source>
</evidence>
<evidence type="ECO:0000305" key="7"/>
<evidence type="ECO:0000312" key="8">
    <source>
        <dbReference type="MGI" id="MGI:1914065"/>
    </source>
</evidence>
<reference key="1">
    <citation type="journal article" date="2005" name="Science">
        <title>The transcriptional landscape of the mammalian genome.</title>
        <authorList>
            <person name="Carninci P."/>
            <person name="Kasukawa T."/>
            <person name="Katayama S."/>
            <person name="Gough J."/>
            <person name="Frith M.C."/>
            <person name="Maeda N."/>
            <person name="Oyama R."/>
            <person name="Ravasi T."/>
            <person name="Lenhard B."/>
            <person name="Wells C."/>
            <person name="Kodzius R."/>
            <person name="Shimokawa K."/>
            <person name="Bajic V.B."/>
            <person name="Brenner S.E."/>
            <person name="Batalov S."/>
            <person name="Forrest A.R."/>
            <person name="Zavolan M."/>
            <person name="Davis M.J."/>
            <person name="Wilming L.G."/>
            <person name="Aidinis V."/>
            <person name="Allen J.E."/>
            <person name="Ambesi-Impiombato A."/>
            <person name="Apweiler R."/>
            <person name="Aturaliya R.N."/>
            <person name="Bailey T.L."/>
            <person name="Bansal M."/>
            <person name="Baxter L."/>
            <person name="Beisel K.W."/>
            <person name="Bersano T."/>
            <person name="Bono H."/>
            <person name="Chalk A.M."/>
            <person name="Chiu K.P."/>
            <person name="Choudhary V."/>
            <person name="Christoffels A."/>
            <person name="Clutterbuck D.R."/>
            <person name="Crowe M.L."/>
            <person name="Dalla E."/>
            <person name="Dalrymple B.P."/>
            <person name="de Bono B."/>
            <person name="Della Gatta G."/>
            <person name="di Bernardo D."/>
            <person name="Down T."/>
            <person name="Engstrom P."/>
            <person name="Fagiolini M."/>
            <person name="Faulkner G."/>
            <person name="Fletcher C.F."/>
            <person name="Fukushima T."/>
            <person name="Furuno M."/>
            <person name="Futaki S."/>
            <person name="Gariboldi M."/>
            <person name="Georgii-Hemming P."/>
            <person name="Gingeras T.R."/>
            <person name="Gojobori T."/>
            <person name="Green R.E."/>
            <person name="Gustincich S."/>
            <person name="Harbers M."/>
            <person name="Hayashi Y."/>
            <person name="Hensch T.K."/>
            <person name="Hirokawa N."/>
            <person name="Hill D."/>
            <person name="Huminiecki L."/>
            <person name="Iacono M."/>
            <person name="Ikeo K."/>
            <person name="Iwama A."/>
            <person name="Ishikawa T."/>
            <person name="Jakt M."/>
            <person name="Kanapin A."/>
            <person name="Katoh M."/>
            <person name="Kawasawa Y."/>
            <person name="Kelso J."/>
            <person name="Kitamura H."/>
            <person name="Kitano H."/>
            <person name="Kollias G."/>
            <person name="Krishnan S.P."/>
            <person name="Kruger A."/>
            <person name="Kummerfeld S.K."/>
            <person name="Kurochkin I.V."/>
            <person name="Lareau L.F."/>
            <person name="Lazarevic D."/>
            <person name="Lipovich L."/>
            <person name="Liu J."/>
            <person name="Liuni S."/>
            <person name="McWilliam S."/>
            <person name="Madan Babu M."/>
            <person name="Madera M."/>
            <person name="Marchionni L."/>
            <person name="Matsuda H."/>
            <person name="Matsuzawa S."/>
            <person name="Miki H."/>
            <person name="Mignone F."/>
            <person name="Miyake S."/>
            <person name="Morris K."/>
            <person name="Mottagui-Tabar S."/>
            <person name="Mulder N."/>
            <person name="Nakano N."/>
            <person name="Nakauchi H."/>
            <person name="Ng P."/>
            <person name="Nilsson R."/>
            <person name="Nishiguchi S."/>
            <person name="Nishikawa S."/>
            <person name="Nori F."/>
            <person name="Ohara O."/>
            <person name="Okazaki Y."/>
            <person name="Orlando V."/>
            <person name="Pang K.C."/>
            <person name="Pavan W.J."/>
            <person name="Pavesi G."/>
            <person name="Pesole G."/>
            <person name="Petrovsky N."/>
            <person name="Piazza S."/>
            <person name="Reed J."/>
            <person name="Reid J.F."/>
            <person name="Ring B.Z."/>
            <person name="Ringwald M."/>
            <person name="Rost B."/>
            <person name="Ruan Y."/>
            <person name="Salzberg S.L."/>
            <person name="Sandelin A."/>
            <person name="Schneider C."/>
            <person name="Schoenbach C."/>
            <person name="Sekiguchi K."/>
            <person name="Semple C.A."/>
            <person name="Seno S."/>
            <person name="Sessa L."/>
            <person name="Sheng Y."/>
            <person name="Shibata Y."/>
            <person name="Shimada H."/>
            <person name="Shimada K."/>
            <person name="Silva D."/>
            <person name="Sinclair B."/>
            <person name="Sperling S."/>
            <person name="Stupka E."/>
            <person name="Sugiura K."/>
            <person name="Sultana R."/>
            <person name="Takenaka Y."/>
            <person name="Taki K."/>
            <person name="Tammoja K."/>
            <person name="Tan S.L."/>
            <person name="Tang S."/>
            <person name="Taylor M.S."/>
            <person name="Tegner J."/>
            <person name="Teichmann S.A."/>
            <person name="Ueda H.R."/>
            <person name="van Nimwegen E."/>
            <person name="Verardo R."/>
            <person name="Wei C.L."/>
            <person name="Yagi K."/>
            <person name="Yamanishi H."/>
            <person name="Zabarovsky E."/>
            <person name="Zhu S."/>
            <person name="Zimmer A."/>
            <person name="Hide W."/>
            <person name="Bult C."/>
            <person name="Grimmond S.M."/>
            <person name="Teasdale R.D."/>
            <person name="Liu E.T."/>
            <person name="Brusic V."/>
            <person name="Quackenbush J."/>
            <person name="Wahlestedt C."/>
            <person name="Mattick J.S."/>
            <person name="Hume D.A."/>
            <person name="Kai C."/>
            <person name="Sasaki D."/>
            <person name="Tomaru Y."/>
            <person name="Fukuda S."/>
            <person name="Kanamori-Katayama M."/>
            <person name="Suzuki M."/>
            <person name="Aoki J."/>
            <person name="Arakawa T."/>
            <person name="Iida J."/>
            <person name="Imamura K."/>
            <person name="Itoh M."/>
            <person name="Kato T."/>
            <person name="Kawaji H."/>
            <person name="Kawagashira N."/>
            <person name="Kawashima T."/>
            <person name="Kojima M."/>
            <person name="Kondo S."/>
            <person name="Konno H."/>
            <person name="Nakano K."/>
            <person name="Ninomiya N."/>
            <person name="Nishio T."/>
            <person name="Okada M."/>
            <person name="Plessy C."/>
            <person name="Shibata K."/>
            <person name="Shiraki T."/>
            <person name="Suzuki S."/>
            <person name="Tagami M."/>
            <person name="Waki K."/>
            <person name="Watahiki A."/>
            <person name="Okamura-Oho Y."/>
            <person name="Suzuki H."/>
            <person name="Kawai J."/>
            <person name="Hayashizaki Y."/>
        </authorList>
    </citation>
    <scope>NUCLEOTIDE SEQUENCE [LARGE SCALE MRNA]</scope>
    <source>
        <strain>C57BL/6J</strain>
        <tissue>Bone marrow</tissue>
        <tissue>Colon</tissue>
    </source>
</reference>
<reference key="2">
    <citation type="journal article" date="2004" name="Genome Res.">
        <title>The status, quality, and expansion of the NIH full-length cDNA project: the Mammalian Gene Collection (MGC).</title>
        <authorList>
            <consortium name="The MGC Project Team"/>
        </authorList>
    </citation>
    <scope>NUCLEOTIDE SEQUENCE [LARGE SCALE MRNA]</scope>
    <source>
        <tissue>Brain</tissue>
    </source>
</reference>
<reference key="3">
    <citation type="journal article" date="2013" name="EMBO J.">
        <title>The mitochondrial calcium uniporter is a multimer that can include a dominant-negative pore-forming subunit.</title>
        <authorList>
            <person name="Raffaello A."/>
            <person name="De Stefani D."/>
            <person name="Sabbadin D."/>
            <person name="Teardo E."/>
            <person name="Merli G."/>
            <person name="Picard A."/>
            <person name="Checchetto V."/>
            <person name="Moro S."/>
            <person name="Szabo I."/>
            <person name="Rizzuto R."/>
        </authorList>
    </citation>
    <scope>FUNCTION</scope>
    <scope>SUBUNIT</scope>
    <scope>INTERACTION WITH MCU</scope>
    <scope>SUBCELLULAR LOCATION</scope>
    <scope>TISSUE SPECIFICITY</scope>
</reference>
<reference key="4">
    <citation type="journal article" date="2019" name="Circulation">
        <title>MCUB regulates the molecular composition of the mitochondrial calcium uniporter channel to limit mitochondrial calcium overload during stress.</title>
        <authorList>
            <person name="Lambert J.P."/>
            <person name="Luongo T.S."/>
            <person name="Tomar D."/>
            <person name="Jadiya P."/>
            <person name="Gao E."/>
            <person name="Zhang X."/>
            <person name="Lucchese A.M."/>
            <person name="Kolmetzky D.W."/>
            <person name="Shah N.S."/>
            <person name="Elrod J.W."/>
        </authorList>
    </citation>
    <scope>FUNCTION</scope>
</reference>
<reference key="5">
    <citation type="journal article" date="2021" name="Sci. Signal.">
        <title>The dominant-negative mitochondrial calcium uniporter subunit MCUb drives macrophage polarization during skeletal muscle regeneration.</title>
        <authorList>
            <person name="Feno S."/>
            <person name="Munari F."/>
            <person name="Reane D.V."/>
            <person name="Gissi R."/>
            <person name="Hoang D.H."/>
            <person name="Castegna A."/>
            <person name="Chazaud B."/>
            <person name="Viola A."/>
            <person name="Rizzuto R."/>
            <person name="Raffaello A."/>
        </authorList>
    </citation>
    <scope>FUNCTION</scope>
    <scope>DISRUPTION PHENOTYPE</scope>
    <scope>TISSUE SPECIFICITY</scope>
</reference>
<reference key="6">
    <citation type="journal article" date="2023" name="Cell Rep.">
        <title>MCUb is an inducible regulator of calcium-dependent mitochondrial metabolism and substrate utilization in muscle.</title>
        <authorList>
            <person name="Huo J."/>
            <person name="Prasad V."/>
            <person name="Grimes K.M."/>
            <person name="Vanhoutte D."/>
            <person name="Blair N.S."/>
            <person name="Lin S.C."/>
            <person name="Bround M.J."/>
            <person name="Bers D.M."/>
            <person name="Molkentin J.D."/>
        </authorList>
    </citation>
    <scope>FUNCTION</scope>
    <scope>DISRUPTION PHENOTYPE</scope>
</reference>
<feature type="transit peptide" description="Mitochondrion" evidence="1">
    <location>
        <begin position="1"/>
        <end position="44"/>
    </location>
</feature>
<feature type="chain" id="PRO_0000282981" description="Calcium uniporter regulatory subunit MCUb, mitochondrial">
    <location>
        <begin position="45"/>
        <end position="345"/>
    </location>
</feature>
<feature type="transmembrane region" description="Helical" evidence="1">
    <location>
        <begin position="229"/>
        <end position="249"/>
    </location>
</feature>
<feature type="transmembrane region" description="Helical" evidence="1">
    <location>
        <begin position="259"/>
        <end position="279"/>
    </location>
</feature>
<feature type="coiled-coil region" evidence="1">
    <location>
        <begin position="188"/>
        <end position="221"/>
    </location>
</feature>
<feature type="coiled-coil region" evidence="1">
    <location>
        <begin position="306"/>
        <end position="334"/>
    </location>
</feature>
<feature type="sequence conflict" description="In Ref. 1; BAE32524." evidence="7" ref="1">
    <original>L</original>
    <variation>R</variation>
    <location>
        <position position="5"/>
    </location>
</feature>
<feature type="sequence conflict" description="In Ref. 1; BAE32524." evidence="7" ref="1">
    <original>Q</original>
    <variation>R</variation>
    <location>
        <position position="21"/>
    </location>
</feature>
<feature type="sequence conflict" description="In Ref. 1; BAE32524." evidence="7" ref="1">
    <original>D</original>
    <variation>G</variation>
    <location>
        <position position="33"/>
    </location>
</feature>
<feature type="sequence conflict" description="In Ref. 1; BAE32524." evidence="7" ref="1">
    <original>R</original>
    <variation>Q</variation>
    <location>
        <position position="304"/>
    </location>
</feature>
<feature type="sequence conflict" description="In Ref. 1; BAE32524." evidence="7" ref="1">
    <original>E</original>
    <variation>G</variation>
    <location>
        <position position="339"/>
    </location>
</feature>
<comment type="function">
    <text evidence="2 3 4 5">Negative regulator of the mitochondrial calcium uniporter (MCU), a channel that mediates calcium uptake into the mitochondrial matrix (PubMed:23900286, PubMed:31533452, PubMed:37976157). MCUB is required to limit mitochondrial calcium overload during stress (PubMed:31533452, PubMed:37976157). Acts as a dominant-negative regulator that displaces MCU from the functional uniplex complex and thereby decreases the association of calcium sensors MICU1 and MICU2, preventing channel gating (PubMed:31533452). Mitochondrial calcium homeostasis plays key roles in mitochondrial metabolism (PubMed:23900286, PubMed:31533452). Acts as an important regulator of mitochondrial metabolism in response to stress in muscle cells: induced in response to fasting, leading to restrict mitochondrial calcium uptake, resulting in reprogramming of mitochondria toward fatty acid oxidation preference (PubMed:37976157). Acts as a regulator of macrophage polarization during skeletal muscle regeneration: inhibition of mitochondrial calcium uptake drives differentiation of macrophages with anti-inflammatory profile, promoting the differentiation and fusion of satellite cells (PubMed:34726954).</text>
</comment>
<comment type="subunit">
    <text evidence="2">Homooligomer (PubMed:23900286). Associates with the uniplex complex, composed of MCU, MICU1, MICU2 and EMRE/SMDT1, inhibiting its activity (PubMed:23900286).</text>
</comment>
<comment type="interaction">
    <interactant intactId="EBI-8847756">
        <id>Q810S1</id>
    </interactant>
    <interactant intactId="EBI-776370">
        <id>Q3UMR5</id>
        <label>Mcu</label>
    </interactant>
    <organismsDiffer>false</organismsDiffer>
    <experiments>3</experiments>
</comment>
<comment type="subcellular location">
    <subcellularLocation>
        <location evidence="2">Mitochondrion inner membrane</location>
        <topology evidence="1">Multi-pass membrane protein</topology>
    </subcellularLocation>
</comment>
<comment type="tissue specificity">
    <text evidence="2 4">Detected in lung, brain and heart, and at lower levels in white fat, skeletal muscle and spleen (PubMed:23900286). Detected at very low levels in kidney and liver (PubMed:23900286). Highly expressed in macrophages during the progression of skeletal muscle regeneration (PubMed:34726954).</text>
</comment>
<comment type="disruption phenotype">
    <text evidence="4 5">Impaired macrophage differentiation program, characterized by macrophage inability to efficiently acquire the anti-inflammatory profile (PubMed:34726954). Mice show delayed muscle cell regeneration through exhaustion of the satellite cell pool (PubMed:34726954). Conditional deletion in skeletal muscle affects mitochondrial metabolism by shifting energy metabolism toward glucose oxidation (PubMed:37976157).</text>
</comment>
<comment type="similarity">
    <text evidence="7">Belongs to the MCU (TC 1.A.77) family.</text>
</comment>
<comment type="sequence caution" evidence="7">
    <conflict type="erroneous initiation">
        <sequence resource="EMBL-CDS" id="BAB31237"/>
    </conflict>
    <text>Truncated N-terminus.</text>
</comment>